<proteinExistence type="inferred from homology"/>
<accession>B2SDX3</accession>
<name>RL5_FRATM</name>
<keyword id="KW-0687">Ribonucleoprotein</keyword>
<keyword id="KW-0689">Ribosomal protein</keyword>
<keyword id="KW-0694">RNA-binding</keyword>
<keyword id="KW-0699">rRNA-binding</keyword>
<keyword id="KW-0820">tRNA-binding</keyword>
<reference key="1">
    <citation type="journal article" date="2009" name="PLoS Pathog.">
        <title>Molecular evolutionary consequences of niche restriction in Francisella tularensis, a facultative intracellular pathogen.</title>
        <authorList>
            <person name="Larsson P."/>
            <person name="Elfsmark D."/>
            <person name="Svensson K."/>
            <person name="Wikstroem P."/>
            <person name="Forsman M."/>
            <person name="Brettin T."/>
            <person name="Keim P."/>
            <person name="Johansson A."/>
        </authorList>
    </citation>
    <scope>NUCLEOTIDE SEQUENCE [LARGE SCALE GENOMIC DNA]</scope>
    <source>
        <strain>FSC147</strain>
    </source>
</reference>
<evidence type="ECO:0000255" key="1">
    <source>
        <dbReference type="HAMAP-Rule" id="MF_01333"/>
    </source>
</evidence>
<evidence type="ECO:0000305" key="2"/>
<comment type="function">
    <text evidence="1">This is one of the proteins that bind and probably mediate the attachment of the 5S RNA into the large ribosomal subunit, where it forms part of the central protuberance. In the 70S ribosome it contacts protein S13 of the 30S subunit (bridge B1b), connecting the 2 subunits; this bridge is implicated in subunit movement. Contacts the P site tRNA; the 5S rRNA and some of its associated proteins might help stabilize positioning of ribosome-bound tRNAs.</text>
</comment>
<comment type="subunit">
    <text evidence="1">Part of the 50S ribosomal subunit; part of the 5S rRNA/L5/L18/L25 subcomplex. Contacts the 5S rRNA and the P site tRNA. Forms a bridge to the 30S subunit in the 70S ribosome.</text>
</comment>
<comment type="similarity">
    <text evidence="1">Belongs to the universal ribosomal protein uL5 family.</text>
</comment>
<organism>
    <name type="scientific">Francisella tularensis subsp. mediasiatica (strain FSC147)</name>
    <dbReference type="NCBI Taxonomy" id="441952"/>
    <lineage>
        <taxon>Bacteria</taxon>
        <taxon>Pseudomonadati</taxon>
        <taxon>Pseudomonadota</taxon>
        <taxon>Gammaproteobacteria</taxon>
        <taxon>Thiotrichales</taxon>
        <taxon>Francisellaceae</taxon>
        <taxon>Francisella</taxon>
    </lineage>
</organism>
<protein>
    <recommendedName>
        <fullName evidence="1">Large ribosomal subunit protein uL5</fullName>
    </recommendedName>
    <alternativeName>
        <fullName evidence="2">50S ribosomal protein L5</fullName>
    </alternativeName>
</protein>
<sequence>MARLKDYYQKKLVAKLKTELGLDNIMEVPAIKKITLNMGVGDAAKDKKIMTFALNDLTAIAGQKPVVTKSKKSIAGFKIRDGWPIGAKVTLRGDRMYEFLDRLITIAIPRIRDFRGLSAKSFDGRGNYSLGMREQISFPEIDYDKVDSIRGLDISITTTAKNDDQGRALLKAFGFPFKS</sequence>
<gene>
    <name evidence="1" type="primary">rplE</name>
    <name type="ordered locus">FTM_1515</name>
</gene>
<feature type="chain" id="PRO_1000142404" description="Large ribosomal subunit protein uL5">
    <location>
        <begin position="1"/>
        <end position="179"/>
    </location>
</feature>
<dbReference type="EMBL" id="CP000915">
    <property type="protein sequence ID" value="ACD31337.1"/>
    <property type="molecule type" value="Genomic_DNA"/>
</dbReference>
<dbReference type="SMR" id="B2SDX3"/>
<dbReference type="KEGG" id="ftm:FTM_1515"/>
<dbReference type="HOGENOM" id="CLU_061015_2_1_6"/>
<dbReference type="GO" id="GO:1990904">
    <property type="term" value="C:ribonucleoprotein complex"/>
    <property type="evidence" value="ECO:0007669"/>
    <property type="project" value="UniProtKB-KW"/>
</dbReference>
<dbReference type="GO" id="GO:0005840">
    <property type="term" value="C:ribosome"/>
    <property type="evidence" value="ECO:0007669"/>
    <property type="project" value="UniProtKB-KW"/>
</dbReference>
<dbReference type="GO" id="GO:0019843">
    <property type="term" value="F:rRNA binding"/>
    <property type="evidence" value="ECO:0007669"/>
    <property type="project" value="UniProtKB-UniRule"/>
</dbReference>
<dbReference type="GO" id="GO:0003735">
    <property type="term" value="F:structural constituent of ribosome"/>
    <property type="evidence" value="ECO:0007669"/>
    <property type="project" value="InterPro"/>
</dbReference>
<dbReference type="GO" id="GO:0000049">
    <property type="term" value="F:tRNA binding"/>
    <property type="evidence" value="ECO:0007669"/>
    <property type="project" value="UniProtKB-UniRule"/>
</dbReference>
<dbReference type="GO" id="GO:0006412">
    <property type="term" value="P:translation"/>
    <property type="evidence" value="ECO:0007669"/>
    <property type="project" value="UniProtKB-UniRule"/>
</dbReference>
<dbReference type="FunFam" id="3.30.1440.10:FF:000001">
    <property type="entry name" value="50S ribosomal protein L5"/>
    <property type="match status" value="1"/>
</dbReference>
<dbReference type="Gene3D" id="3.30.1440.10">
    <property type="match status" value="1"/>
</dbReference>
<dbReference type="HAMAP" id="MF_01333_B">
    <property type="entry name" value="Ribosomal_uL5_B"/>
    <property type="match status" value="1"/>
</dbReference>
<dbReference type="InterPro" id="IPR002132">
    <property type="entry name" value="Ribosomal_uL5"/>
</dbReference>
<dbReference type="InterPro" id="IPR020930">
    <property type="entry name" value="Ribosomal_uL5_bac-type"/>
</dbReference>
<dbReference type="InterPro" id="IPR031309">
    <property type="entry name" value="Ribosomal_uL5_C"/>
</dbReference>
<dbReference type="InterPro" id="IPR020929">
    <property type="entry name" value="Ribosomal_uL5_CS"/>
</dbReference>
<dbReference type="InterPro" id="IPR022803">
    <property type="entry name" value="Ribosomal_uL5_dom_sf"/>
</dbReference>
<dbReference type="InterPro" id="IPR031310">
    <property type="entry name" value="Ribosomal_uL5_N"/>
</dbReference>
<dbReference type="NCBIfam" id="NF000585">
    <property type="entry name" value="PRK00010.1"/>
    <property type="match status" value="1"/>
</dbReference>
<dbReference type="PANTHER" id="PTHR11994">
    <property type="entry name" value="60S RIBOSOMAL PROTEIN L11-RELATED"/>
    <property type="match status" value="1"/>
</dbReference>
<dbReference type="Pfam" id="PF00281">
    <property type="entry name" value="Ribosomal_L5"/>
    <property type="match status" value="1"/>
</dbReference>
<dbReference type="Pfam" id="PF00673">
    <property type="entry name" value="Ribosomal_L5_C"/>
    <property type="match status" value="1"/>
</dbReference>
<dbReference type="PIRSF" id="PIRSF002161">
    <property type="entry name" value="Ribosomal_L5"/>
    <property type="match status" value="1"/>
</dbReference>
<dbReference type="SUPFAM" id="SSF55282">
    <property type="entry name" value="RL5-like"/>
    <property type="match status" value="1"/>
</dbReference>
<dbReference type="PROSITE" id="PS00358">
    <property type="entry name" value="RIBOSOMAL_L5"/>
    <property type="match status" value="1"/>
</dbReference>